<reference key="1">
    <citation type="journal article" date="2004" name="Nature">
        <title>Oxygen sensation and social feeding mediated by a C. elegans guanylate cyclase homologue.</title>
        <authorList>
            <person name="Gray J.M."/>
            <person name="Karow D.S."/>
            <person name="Lu H."/>
            <person name="Chang A.J."/>
            <person name="Chang J.S."/>
            <person name="Ellis R.E."/>
            <person name="Marletta M.A."/>
            <person name="Bargmann C.I."/>
        </authorList>
    </citation>
    <scope>NUCLEOTIDE SEQUENCE [MRNA]</scope>
</reference>
<reference key="2">
    <citation type="submission" date="1999-03" db="EMBL/GenBank/DDBJ databases">
        <title>Soluble guanylate cyclases in Caenorhabditis elegans.</title>
        <authorList>
            <person name="Hudson M.L."/>
        </authorList>
    </citation>
    <scope>NUCLEOTIDE SEQUENCE [MRNA]</scope>
</reference>
<reference key="3">
    <citation type="journal article" date="1998" name="Science">
        <title>Genome sequence of the nematode C. elegans: a platform for investigating biology.</title>
        <authorList>
            <consortium name="The C. elegans sequencing consortium"/>
        </authorList>
    </citation>
    <scope>NUCLEOTIDE SEQUENCE [LARGE SCALE GENOMIC DNA]</scope>
    <source>
        <strain>Bristol N2</strain>
    </source>
</reference>
<reference key="4">
    <citation type="journal article" date="1997" name="Proc. Natl. Acad. Sci. U.S.A.">
        <title>Guanylyl cyclase expression in specific sensory neurons: a new family of chemosensory receptors.</title>
        <authorList>
            <person name="Yu S."/>
            <person name="Avery L."/>
            <person name="Baude E."/>
            <person name="Garbers D.L."/>
        </authorList>
    </citation>
    <scope>TISSUE SPECIFICITY</scope>
</reference>
<reference key="5">
    <citation type="journal article" date="2005" name="Curr. Biol.">
        <title>Experience-dependent modulation of C. elegans behavior by ambient oxygen.</title>
        <authorList>
            <person name="Cheung B.H."/>
            <person name="Cohen M."/>
            <person name="Rogers C."/>
            <person name="Albayram O."/>
            <person name="de Bono M."/>
        </authorList>
    </citation>
    <scope>FUNCTION</scope>
    <scope>DISRUPTION PHENOTYPE</scope>
</reference>
<comment type="function">
    <text evidence="1 4">Synthesizes cyclic GMP (cGMP) from GTP (By similarity). Influences aerotaxis responses, aggregation and bordering behaviors (gathering around the edge of a bacterial lawn) in combination with other soluble guanylate cyclases.</text>
</comment>
<comment type="catalytic activity">
    <reaction>
        <text>GTP = 3',5'-cyclic GMP + diphosphate</text>
        <dbReference type="Rhea" id="RHEA:13665"/>
        <dbReference type="ChEBI" id="CHEBI:33019"/>
        <dbReference type="ChEBI" id="CHEBI:37565"/>
        <dbReference type="ChEBI" id="CHEBI:57746"/>
        <dbReference type="EC" id="4.6.1.2"/>
    </reaction>
</comment>
<comment type="cofactor">
    <cofactor evidence="1">
        <name>heme</name>
        <dbReference type="ChEBI" id="CHEBI:30413"/>
    </cofactor>
    <text evidence="1">Binds 1 or 2 heme groups per heterodimer.</text>
</comment>
<comment type="activity regulation">
    <text evidence="1">May be regulated by molecular oxygen. Probably not activated by nitric oxide (NO) (By similarity).</text>
</comment>
<comment type="subunit">
    <text evidence="1">Heterodimer; with other soluble guanylate cyclases.</text>
</comment>
<comment type="subcellular location">
    <subcellularLocation>
        <location evidence="1">Cytoplasm</location>
    </subcellularLocation>
</comment>
<comment type="tissue specificity">
    <text evidence="5">Expressed in a small number of neurons, corresponding to URX, AQR and PQR neurons.</text>
</comment>
<comment type="disruption phenotype">
    <text evidence="4">No response to varying levels of oxygen. Significantly reduced aggregation and bordering behaviors.</text>
</comment>
<comment type="miscellaneous">
    <text>There are two types of guanylate cyclases: soluble forms and membrane-associated receptor forms.</text>
</comment>
<comment type="similarity">
    <text evidence="3">Belongs to the adenylyl cyclase class-4/guanylyl cyclase family.</text>
</comment>
<gene>
    <name type="primary">gcy-32</name>
    <name type="ORF">C06B3.8</name>
</gene>
<dbReference type="EC" id="4.6.1.2"/>
<dbReference type="EMBL" id="AY652942">
    <property type="protein sequence ID" value="AAT73709.1"/>
    <property type="molecule type" value="mRNA"/>
</dbReference>
<dbReference type="EMBL" id="AJ133597">
    <property type="protein sequence ID" value="CAC35530.1"/>
    <property type="molecule type" value="mRNA"/>
</dbReference>
<dbReference type="EMBL" id="Z77652">
    <property type="protein sequence ID" value="CAB01118.3"/>
    <property type="molecule type" value="Genomic_DNA"/>
</dbReference>
<dbReference type="PIR" id="T18984">
    <property type="entry name" value="T18984"/>
</dbReference>
<dbReference type="RefSeq" id="NP_506452.5">
    <property type="nucleotide sequence ID" value="NM_074051.5"/>
</dbReference>
<dbReference type="SMR" id="Q6DNF7"/>
<dbReference type="FunCoup" id="Q6DNF7">
    <property type="interactions" value="76"/>
</dbReference>
<dbReference type="STRING" id="6239.C06B3.8.1"/>
<dbReference type="PaxDb" id="6239-C06B3.8"/>
<dbReference type="EnsemblMetazoa" id="C06B3.8.1">
    <property type="protein sequence ID" value="C06B3.8.1"/>
    <property type="gene ID" value="WBGene00001552"/>
</dbReference>
<dbReference type="GeneID" id="179887"/>
<dbReference type="KEGG" id="cel:CELE_C06B3.8"/>
<dbReference type="UCSC" id="C06B3.8.1">
    <property type="organism name" value="c. elegans"/>
</dbReference>
<dbReference type="AGR" id="WB:WBGene00001552"/>
<dbReference type="CTD" id="179887"/>
<dbReference type="WormBase" id="C06B3.8">
    <property type="protein sequence ID" value="CE44168"/>
    <property type="gene ID" value="WBGene00001552"/>
    <property type="gene designation" value="gcy-32"/>
</dbReference>
<dbReference type="eggNOG" id="KOG4171">
    <property type="taxonomic scope" value="Eukaryota"/>
</dbReference>
<dbReference type="HOGENOM" id="CLU_011614_4_0_1"/>
<dbReference type="InParanoid" id="Q6DNF7"/>
<dbReference type="OMA" id="HIETREY"/>
<dbReference type="OrthoDB" id="6127067at2759"/>
<dbReference type="PhylomeDB" id="Q6DNF7"/>
<dbReference type="PRO" id="PR:Q6DNF7"/>
<dbReference type="Proteomes" id="UP000001940">
    <property type="component" value="Chromosome V"/>
</dbReference>
<dbReference type="Bgee" id="WBGene00001552">
    <property type="expression patterns" value="Expressed in larva and 2 other cell types or tissues"/>
</dbReference>
<dbReference type="GO" id="GO:0008074">
    <property type="term" value="C:guanylate cyclase complex, soluble"/>
    <property type="evidence" value="ECO:0000318"/>
    <property type="project" value="GO_Central"/>
</dbReference>
<dbReference type="GO" id="GO:0005525">
    <property type="term" value="F:GTP binding"/>
    <property type="evidence" value="ECO:0007669"/>
    <property type="project" value="UniProtKB-KW"/>
</dbReference>
<dbReference type="GO" id="GO:0004383">
    <property type="term" value="F:guanylate cyclase activity"/>
    <property type="evidence" value="ECO:0000318"/>
    <property type="project" value="GO_Central"/>
</dbReference>
<dbReference type="GO" id="GO:0020037">
    <property type="term" value="F:heme binding"/>
    <property type="evidence" value="ECO:0007669"/>
    <property type="project" value="InterPro"/>
</dbReference>
<dbReference type="GO" id="GO:0046872">
    <property type="term" value="F:metal ion binding"/>
    <property type="evidence" value="ECO:0007669"/>
    <property type="project" value="UniProtKB-KW"/>
</dbReference>
<dbReference type="GO" id="GO:0019934">
    <property type="term" value="P:cGMP-mediated signaling"/>
    <property type="evidence" value="ECO:0000318"/>
    <property type="project" value="GO_Central"/>
</dbReference>
<dbReference type="GO" id="GO:0070482">
    <property type="term" value="P:response to oxygen levels"/>
    <property type="evidence" value="ECO:0000318"/>
    <property type="project" value="GO_Central"/>
</dbReference>
<dbReference type="CDD" id="cd07302">
    <property type="entry name" value="CHD"/>
    <property type="match status" value="1"/>
</dbReference>
<dbReference type="FunFam" id="3.30.70.1230:FF:000007">
    <property type="entry name" value="Guanylate cyclase soluble subunit alpha-3"/>
    <property type="match status" value="1"/>
</dbReference>
<dbReference type="FunFam" id="3.30.450.260:FF:000003">
    <property type="entry name" value="Soluble guanylate cyclase gcy-32"/>
    <property type="match status" value="1"/>
</dbReference>
<dbReference type="FunFam" id="3.90.1520.10:FF:000005">
    <property type="entry name" value="Soluble guanylate cyclase gcy-36"/>
    <property type="match status" value="1"/>
</dbReference>
<dbReference type="Gene3D" id="6.10.250.780">
    <property type="match status" value="1"/>
</dbReference>
<dbReference type="Gene3D" id="3.90.1520.10">
    <property type="entry name" value="H-NOX domain"/>
    <property type="match status" value="1"/>
</dbReference>
<dbReference type="Gene3D" id="3.30.450.260">
    <property type="entry name" value="Haem NO binding associated domain"/>
    <property type="match status" value="1"/>
</dbReference>
<dbReference type="Gene3D" id="3.30.70.1230">
    <property type="entry name" value="Nucleotide cyclase"/>
    <property type="match status" value="1"/>
</dbReference>
<dbReference type="InterPro" id="IPR001054">
    <property type="entry name" value="A/G_cyclase"/>
</dbReference>
<dbReference type="InterPro" id="IPR018297">
    <property type="entry name" value="A/G_cyclase_CS"/>
</dbReference>
<dbReference type="InterPro" id="IPR038158">
    <property type="entry name" value="H-NOX_domain_sf"/>
</dbReference>
<dbReference type="InterPro" id="IPR011644">
    <property type="entry name" value="Heme_NO-bd"/>
</dbReference>
<dbReference type="InterPro" id="IPR011645">
    <property type="entry name" value="HNOB_dom_associated"/>
</dbReference>
<dbReference type="InterPro" id="IPR042463">
    <property type="entry name" value="HNOB_dom_associated_sf"/>
</dbReference>
<dbReference type="InterPro" id="IPR024096">
    <property type="entry name" value="NO_sig/Golgi_transp_ligand-bd"/>
</dbReference>
<dbReference type="InterPro" id="IPR029787">
    <property type="entry name" value="Nucleotide_cyclase"/>
</dbReference>
<dbReference type="PANTHER" id="PTHR45655">
    <property type="entry name" value="GUANYLATE CYCLASE SOLUBLE SUBUNIT BETA-2"/>
    <property type="match status" value="1"/>
</dbReference>
<dbReference type="PANTHER" id="PTHR45655:SF13">
    <property type="entry name" value="SOLUBLE GUANYLATE CYCLASE GCY-32-RELATED"/>
    <property type="match status" value="1"/>
</dbReference>
<dbReference type="Pfam" id="PF00211">
    <property type="entry name" value="Guanylate_cyc"/>
    <property type="match status" value="1"/>
</dbReference>
<dbReference type="Pfam" id="PF07700">
    <property type="entry name" value="HNOB"/>
    <property type="match status" value="1"/>
</dbReference>
<dbReference type="Pfam" id="PF07701">
    <property type="entry name" value="HNOBA"/>
    <property type="match status" value="1"/>
</dbReference>
<dbReference type="SMART" id="SM00044">
    <property type="entry name" value="CYCc"/>
    <property type="match status" value="1"/>
</dbReference>
<dbReference type="SUPFAM" id="SSF111126">
    <property type="entry name" value="Ligand-binding domain in the NO signalling and Golgi transport"/>
    <property type="match status" value="1"/>
</dbReference>
<dbReference type="SUPFAM" id="SSF55073">
    <property type="entry name" value="Nucleotide cyclase"/>
    <property type="match status" value="1"/>
</dbReference>
<dbReference type="PROSITE" id="PS00452">
    <property type="entry name" value="GUANYLATE_CYCLASE_1"/>
    <property type="match status" value="1"/>
</dbReference>
<dbReference type="PROSITE" id="PS50125">
    <property type="entry name" value="GUANYLATE_CYCLASE_2"/>
    <property type="match status" value="1"/>
</dbReference>
<feature type="chain" id="PRO_0000074123" description="Soluble guanylate cyclase gcy-32">
    <location>
        <begin position="1"/>
        <end position="684"/>
    </location>
</feature>
<feature type="domain" description="Guanylate cyclase" evidence="3">
    <location>
        <begin position="454"/>
        <end position="582"/>
    </location>
</feature>
<feature type="coiled-coil region" evidence="2">
    <location>
        <begin position="396"/>
        <end position="432"/>
    </location>
</feature>
<feature type="binding site" description="proximal binding residue" evidence="1">
    <location>
        <position position="105"/>
    </location>
    <ligand>
        <name>heme</name>
        <dbReference type="ChEBI" id="CHEBI:30413"/>
    </ligand>
    <ligandPart>
        <name>Fe</name>
        <dbReference type="ChEBI" id="CHEBI:18248"/>
    </ligandPart>
</feature>
<feature type="binding site" evidence="1">
    <location>
        <position position="459"/>
    </location>
    <ligand>
        <name>Mg(2+)</name>
        <dbReference type="ChEBI" id="CHEBI:18420"/>
    </ligand>
</feature>
<feature type="binding site" evidence="1">
    <location>
        <position position="503"/>
    </location>
    <ligand>
        <name>Mg(2+)</name>
        <dbReference type="ChEBI" id="CHEBI:18420"/>
    </ligand>
</feature>
<feature type="sequence conflict" description="In Ref. 2; CAC35530." evidence="6" ref="2">
    <original>I</original>
    <variation>V</variation>
    <location>
        <position position="353"/>
    </location>
</feature>
<feature type="sequence conflict" description="In Ref. 2; CAC35530." evidence="6" ref="2">
    <original>K</original>
    <variation>R</variation>
    <location>
        <position position="423"/>
    </location>
</feature>
<feature type="sequence conflict" description="In Ref. 2; CAC35530." evidence="6" ref="2">
    <original>Q</original>
    <variation>H</variation>
    <location>
        <position position="465"/>
    </location>
</feature>
<feature type="sequence conflict" description="In Ref. 2; CAC35530." evidence="6" ref="2">
    <original>N</original>
    <variation>S</variation>
    <location>
        <position position="648"/>
    </location>
</feature>
<organism>
    <name type="scientific">Caenorhabditis elegans</name>
    <dbReference type="NCBI Taxonomy" id="6239"/>
    <lineage>
        <taxon>Eukaryota</taxon>
        <taxon>Metazoa</taxon>
        <taxon>Ecdysozoa</taxon>
        <taxon>Nematoda</taxon>
        <taxon>Chromadorea</taxon>
        <taxon>Rhabditida</taxon>
        <taxon>Rhabditina</taxon>
        <taxon>Rhabditomorpha</taxon>
        <taxon>Rhabditoidea</taxon>
        <taxon>Rhabditidae</taxon>
        <taxon>Peloderinae</taxon>
        <taxon>Caenorhabditis</taxon>
    </lineage>
</organism>
<protein>
    <recommendedName>
        <fullName>Soluble guanylate cyclase gcy-32</fullName>
        <ecNumber>4.6.1.2</ecNumber>
    </recommendedName>
</protein>
<keyword id="KW-0141">cGMP biosynthesis</keyword>
<keyword id="KW-0175">Coiled coil</keyword>
<keyword id="KW-0963">Cytoplasm</keyword>
<keyword id="KW-0342">GTP-binding</keyword>
<keyword id="KW-0349">Heme</keyword>
<keyword id="KW-0408">Iron</keyword>
<keyword id="KW-0456">Lyase</keyword>
<keyword id="KW-0460">Magnesium</keyword>
<keyword id="KW-0479">Metal-binding</keyword>
<keyword id="KW-0547">Nucleotide-binding</keyword>
<keyword id="KW-1185">Reference proteome</keyword>
<accession>Q6DNF7</accession>
<accession>Q17707</accession>
<accession>Q9BI80</accession>
<sequence>MFGFIHESIRQLVIRNYGEDTWTQVLERSGFESGKENIMNHYYSDTDTYVLVDSVSLVLKVTKDQVWEMYGGFLITYSMEIGWDELVRSMSPNLKGFLDNLDSLHYFIDHVVYKANLRGPSFRCEETPDGTLLLHYFTGRPGLYHIVKGVVKEVAKRVFDLDITLVVQGRTQRSVHMNNGERVEEHVVFLINNLSEPRRDSEGSEVSLLTSTNANFPTIVDDTLGISLDDFSKALPYHFVIDESCKLVQCGSELHNHIPNELLQPGTPILRIFEINRPQIPLDFENICNFINAVFVLQVKTSPLKKKHMDAMSQEELKQEMETLDEDATNELTQGHHLKLKGQMMLLASKKHIIYLCSPYVTSINELMQYGMRLTAMPLHDATRDLILLNQQRLSDVEVNLQLEANNEQLETMTRELELERQKTDSILKDMLPRRIAQQLLSGEHIEACEHEATVMFCDLPAFQQAIPQCSPKDIVNMLNEIFRKLDRIVVIRGVYKVETVSDSYMAVSGIPDYTPEHAENMCHVALGMMWEARSVIDPVSKTPFLLRIGIHSGTITAGVVGTVHPKYCLFGETVTLASQMESLGMAGKIQCSKWAYQKAMETGRFEFSPRGRIDVKQRGLTETYFLTRSLKKSIWEIIDHDRDINVNSIEGYEELETAIENAVTIKSALPRPDQRNSAACSIS</sequence>
<evidence type="ECO:0000250" key="1"/>
<evidence type="ECO:0000255" key="2"/>
<evidence type="ECO:0000255" key="3">
    <source>
        <dbReference type="PROSITE-ProRule" id="PRU00099"/>
    </source>
</evidence>
<evidence type="ECO:0000269" key="4">
    <source>
    </source>
</evidence>
<evidence type="ECO:0000269" key="5">
    <source>
    </source>
</evidence>
<evidence type="ECO:0000305" key="6"/>
<proteinExistence type="evidence at transcript level"/>
<name>GCY32_CAEEL</name>